<reference key="1">
    <citation type="submission" date="2007-02" db="EMBL/GenBank/DDBJ databases">
        <title>Complete sequence of Mycobacterium sp. JLS.</title>
        <authorList>
            <consortium name="US DOE Joint Genome Institute"/>
            <person name="Copeland A."/>
            <person name="Lucas S."/>
            <person name="Lapidus A."/>
            <person name="Barry K."/>
            <person name="Detter J.C."/>
            <person name="Glavina del Rio T."/>
            <person name="Hammon N."/>
            <person name="Israni S."/>
            <person name="Dalin E."/>
            <person name="Tice H."/>
            <person name="Pitluck S."/>
            <person name="Chain P."/>
            <person name="Malfatti S."/>
            <person name="Shin M."/>
            <person name="Vergez L."/>
            <person name="Schmutz J."/>
            <person name="Larimer F."/>
            <person name="Land M."/>
            <person name="Hauser L."/>
            <person name="Kyrpides N."/>
            <person name="Mikhailova N."/>
            <person name="Miller C.D."/>
            <person name="Anderson A.J."/>
            <person name="Sims R.C."/>
            <person name="Richardson P."/>
        </authorList>
    </citation>
    <scope>NUCLEOTIDE SEQUENCE [LARGE SCALE GENOMIC DNA]</scope>
    <source>
        <strain>JLS</strain>
    </source>
</reference>
<comment type="function">
    <text evidence="1">Part of the twin-arginine translocation (Tat) system that transports large folded proteins containing a characteristic twin-arginine motif in their signal peptide across membranes. TatA could form the protein-conducting channel of the Tat system.</text>
</comment>
<comment type="subunit">
    <text evidence="1">The Tat system comprises two distinct complexes: a TatABC complex, containing multiple copies of TatA, TatB and TatC subunits, and a separate TatA complex, containing only TatA subunits. Substrates initially bind to the TatABC complex, which probably triggers association of the separate TatA complex to form the active translocon.</text>
</comment>
<comment type="subcellular location">
    <subcellularLocation>
        <location evidence="1">Cell membrane</location>
        <topology evidence="1">Single-pass membrane protein</topology>
    </subcellularLocation>
</comment>
<comment type="similarity">
    <text evidence="1">Belongs to the TatA/E family.</text>
</comment>
<protein>
    <recommendedName>
        <fullName evidence="1">Sec-independent protein translocase protein TatA</fullName>
    </recommendedName>
</protein>
<dbReference type="EMBL" id="CP000580">
    <property type="protein sequence ID" value="ABN98295.1"/>
    <property type="molecule type" value="Genomic_DNA"/>
</dbReference>
<dbReference type="SMR" id="A3PZG8"/>
<dbReference type="KEGG" id="mjl:Mjls_2511"/>
<dbReference type="HOGENOM" id="CLU_086034_4_2_11"/>
<dbReference type="BioCyc" id="MSP164757:G1G8C-2530-MONOMER"/>
<dbReference type="GO" id="GO:0033281">
    <property type="term" value="C:TAT protein transport complex"/>
    <property type="evidence" value="ECO:0007669"/>
    <property type="project" value="UniProtKB-UniRule"/>
</dbReference>
<dbReference type="GO" id="GO:0008320">
    <property type="term" value="F:protein transmembrane transporter activity"/>
    <property type="evidence" value="ECO:0007669"/>
    <property type="project" value="UniProtKB-UniRule"/>
</dbReference>
<dbReference type="GO" id="GO:0043953">
    <property type="term" value="P:protein transport by the Tat complex"/>
    <property type="evidence" value="ECO:0007669"/>
    <property type="project" value="UniProtKB-UniRule"/>
</dbReference>
<dbReference type="Gene3D" id="1.20.5.3310">
    <property type="match status" value="1"/>
</dbReference>
<dbReference type="HAMAP" id="MF_00236">
    <property type="entry name" value="TatA_E"/>
    <property type="match status" value="1"/>
</dbReference>
<dbReference type="InterPro" id="IPR003369">
    <property type="entry name" value="TatA/B/E"/>
</dbReference>
<dbReference type="InterPro" id="IPR006312">
    <property type="entry name" value="TatA/E"/>
</dbReference>
<dbReference type="NCBIfam" id="NF001854">
    <property type="entry name" value="PRK00575.1"/>
    <property type="match status" value="1"/>
</dbReference>
<dbReference type="NCBIfam" id="TIGR01411">
    <property type="entry name" value="tatAE"/>
    <property type="match status" value="1"/>
</dbReference>
<dbReference type="PANTHER" id="PTHR42982">
    <property type="entry name" value="SEC-INDEPENDENT PROTEIN TRANSLOCASE PROTEIN TATA"/>
    <property type="match status" value="1"/>
</dbReference>
<dbReference type="PANTHER" id="PTHR42982:SF8">
    <property type="entry name" value="SEC-INDEPENDENT PROTEIN TRANSLOCASE PROTEIN TATA"/>
    <property type="match status" value="1"/>
</dbReference>
<dbReference type="Pfam" id="PF02416">
    <property type="entry name" value="TatA_B_E"/>
    <property type="match status" value="1"/>
</dbReference>
<sequence>MGGLQPWHWVIVIAVFVLLFGAKKLPDAARSLGKSMRIFKSEIKEMQSEGKSDNPPATPITSERVDTNPTAEQPDKRSA</sequence>
<organism>
    <name type="scientific">Mycobacterium sp. (strain JLS)</name>
    <dbReference type="NCBI Taxonomy" id="164757"/>
    <lineage>
        <taxon>Bacteria</taxon>
        <taxon>Bacillati</taxon>
        <taxon>Actinomycetota</taxon>
        <taxon>Actinomycetes</taxon>
        <taxon>Mycobacteriales</taxon>
        <taxon>Mycobacteriaceae</taxon>
        <taxon>Mycobacterium</taxon>
    </lineage>
</organism>
<keyword id="KW-1003">Cell membrane</keyword>
<keyword id="KW-0472">Membrane</keyword>
<keyword id="KW-0653">Protein transport</keyword>
<keyword id="KW-0811">Translocation</keyword>
<keyword id="KW-0812">Transmembrane</keyword>
<keyword id="KW-1133">Transmembrane helix</keyword>
<keyword id="KW-0813">Transport</keyword>
<feature type="chain" id="PRO_1000044402" description="Sec-independent protein translocase protein TatA">
    <location>
        <begin position="1"/>
        <end position="79"/>
    </location>
</feature>
<feature type="transmembrane region" description="Helical" evidence="1">
    <location>
        <begin position="1"/>
        <end position="21"/>
    </location>
</feature>
<feature type="region of interest" description="Disordered" evidence="2">
    <location>
        <begin position="43"/>
        <end position="79"/>
    </location>
</feature>
<feature type="compositionally biased region" description="Basic and acidic residues" evidence="2">
    <location>
        <begin position="43"/>
        <end position="52"/>
    </location>
</feature>
<proteinExistence type="inferred from homology"/>
<name>TATA_MYCSJ</name>
<accession>A3PZG8</accession>
<gene>
    <name evidence="1" type="primary">tatA</name>
    <name type="ordered locus">Mjls_2511</name>
</gene>
<evidence type="ECO:0000255" key="1">
    <source>
        <dbReference type="HAMAP-Rule" id="MF_00236"/>
    </source>
</evidence>
<evidence type="ECO:0000256" key="2">
    <source>
        <dbReference type="SAM" id="MobiDB-lite"/>
    </source>
</evidence>